<feature type="chain" id="PRO_0000382419" description="Glutamate-1-semialdehyde 2,1-aminomutase">
    <location>
        <begin position="1"/>
        <end position="424"/>
    </location>
</feature>
<feature type="modified residue" description="N6-(pyridoxal phosphate)lysine" evidence="1">
    <location>
        <position position="258"/>
    </location>
</feature>
<evidence type="ECO:0000255" key="1">
    <source>
        <dbReference type="HAMAP-Rule" id="MF_00375"/>
    </source>
</evidence>
<organism>
    <name type="scientific">Pyrobaculum neutrophilum (strain DSM 2338 / JCM 9278 / NBRC 100436 / V24Sta)</name>
    <name type="common">Thermoproteus neutrophilus</name>
    <dbReference type="NCBI Taxonomy" id="444157"/>
    <lineage>
        <taxon>Archaea</taxon>
        <taxon>Thermoproteota</taxon>
        <taxon>Thermoprotei</taxon>
        <taxon>Thermoproteales</taxon>
        <taxon>Thermoproteaceae</taxon>
        <taxon>Pyrobaculum</taxon>
    </lineage>
</organism>
<dbReference type="EC" id="5.4.3.8" evidence="1"/>
<dbReference type="EMBL" id="CP001014">
    <property type="protein sequence ID" value="ACB40815.1"/>
    <property type="molecule type" value="Genomic_DNA"/>
</dbReference>
<dbReference type="RefSeq" id="WP_012351234.1">
    <property type="nucleotide sequence ID" value="NC_010525.1"/>
</dbReference>
<dbReference type="SMR" id="B1YBL3"/>
<dbReference type="STRING" id="444157.Tneu_1900"/>
<dbReference type="GeneID" id="6164885"/>
<dbReference type="KEGG" id="tne:Tneu_1900"/>
<dbReference type="eggNOG" id="arCOG00918">
    <property type="taxonomic scope" value="Archaea"/>
</dbReference>
<dbReference type="HOGENOM" id="CLU_016922_1_5_2"/>
<dbReference type="OrthoDB" id="6524at2157"/>
<dbReference type="UniPathway" id="UPA00251">
    <property type="reaction ID" value="UER00317"/>
</dbReference>
<dbReference type="Proteomes" id="UP000001694">
    <property type="component" value="Chromosome"/>
</dbReference>
<dbReference type="GO" id="GO:0005737">
    <property type="term" value="C:cytoplasm"/>
    <property type="evidence" value="ECO:0007669"/>
    <property type="project" value="UniProtKB-SubCell"/>
</dbReference>
<dbReference type="GO" id="GO:0042286">
    <property type="term" value="F:glutamate-1-semialdehyde 2,1-aminomutase activity"/>
    <property type="evidence" value="ECO:0007669"/>
    <property type="project" value="UniProtKB-UniRule"/>
</dbReference>
<dbReference type="GO" id="GO:0030170">
    <property type="term" value="F:pyridoxal phosphate binding"/>
    <property type="evidence" value="ECO:0007669"/>
    <property type="project" value="InterPro"/>
</dbReference>
<dbReference type="GO" id="GO:0008483">
    <property type="term" value="F:transaminase activity"/>
    <property type="evidence" value="ECO:0007669"/>
    <property type="project" value="InterPro"/>
</dbReference>
<dbReference type="GO" id="GO:0006782">
    <property type="term" value="P:protoporphyrinogen IX biosynthetic process"/>
    <property type="evidence" value="ECO:0007669"/>
    <property type="project" value="UniProtKB-UniRule"/>
</dbReference>
<dbReference type="CDD" id="cd00610">
    <property type="entry name" value="OAT_like"/>
    <property type="match status" value="1"/>
</dbReference>
<dbReference type="FunFam" id="3.40.640.10:FF:000021">
    <property type="entry name" value="Glutamate-1-semialdehyde 2,1-aminomutase"/>
    <property type="match status" value="1"/>
</dbReference>
<dbReference type="Gene3D" id="3.90.1150.10">
    <property type="entry name" value="Aspartate Aminotransferase, domain 1"/>
    <property type="match status" value="1"/>
</dbReference>
<dbReference type="Gene3D" id="3.40.640.10">
    <property type="entry name" value="Type I PLP-dependent aspartate aminotransferase-like (Major domain)"/>
    <property type="match status" value="1"/>
</dbReference>
<dbReference type="HAMAP" id="MF_00375">
    <property type="entry name" value="HemL_aminotrans_3"/>
    <property type="match status" value="1"/>
</dbReference>
<dbReference type="InterPro" id="IPR004639">
    <property type="entry name" value="4pyrrol_synth_GluAld_NH2Trfase"/>
</dbReference>
<dbReference type="InterPro" id="IPR005814">
    <property type="entry name" value="Aminotrans_3"/>
</dbReference>
<dbReference type="InterPro" id="IPR049704">
    <property type="entry name" value="Aminotrans_3_PPA_site"/>
</dbReference>
<dbReference type="InterPro" id="IPR015424">
    <property type="entry name" value="PyrdxlP-dep_Trfase"/>
</dbReference>
<dbReference type="InterPro" id="IPR015421">
    <property type="entry name" value="PyrdxlP-dep_Trfase_major"/>
</dbReference>
<dbReference type="InterPro" id="IPR015422">
    <property type="entry name" value="PyrdxlP-dep_Trfase_small"/>
</dbReference>
<dbReference type="NCBIfam" id="TIGR00713">
    <property type="entry name" value="hemL"/>
    <property type="match status" value="1"/>
</dbReference>
<dbReference type="NCBIfam" id="NF000818">
    <property type="entry name" value="PRK00062.1"/>
    <property type="match status" value="1"/>
</dbReference>
<dbReference type="PANTHER" id="PTHR43713">
    <property type="entry name" value="GLUTAMATE-1-SEMIALDEHYDE 2,1-AMINOMUTASE"/>
    <property type="match status" value="1"/>
</dbReference>
<dbReference type="PANTHER" id="PTHR43713:SF3">
    <property type="entry name" value="GLUTAMATE-1-SEMIALDEHYDE 2,1-AMINOMUTASE 1, CHLOROPLASTIC-RELATED"/>
    <property type="match status" value="1"/>
</dbReference>
<dbReference type="Pfam" id="PF00202">
    <property type="entry name" value="Aminotran_3"/>
    <property type="match status" value="1"/>
</dbReference>
<dbReference type="SUPFAM" id="SSF53383">
    <property type="entry name" value="PLP-dependent transferases"/>
    <property type="match status" value="1"/>
</dbReference>
<dbReference type="PROSITE" id="PS00600">
    <property type="entry name" value="AA_TRANSFER_CLASS_3"/>
    <property type="match status" value="1"/>
</dbReference>
<reference key="1">
    <citation type="submission" date="2008-03" db="EMBL/GenBank/DDBJ databases">
        <title>Complete sequence of Thermoproteus neutrophilus V24Sta.</title>
        <authorList>
            <consortium name="US DOE Joint Genome Institute"/>
            <person name="Copeland A."/>
            <person name="Lucas S."/>
            <person name="Lapidus A."/>
            <person name="Glavina del Rio T."/>
            <person name="Dalin E."/>
            <person name="Tice H."/>
            <person name="Bruce D."/>
            <person name="Goodwin L."/>
            <person name="Pitluck S."/>
            <person name="Sims D."/>
            <person name="Brettin T."/>
            <person name="Detter J.C."/>
            <person name="Han C."/>
            <person name="Kuske C.R."/>
            <person name="Schmutz J."/>
            <person name="Larimer F."/>
            <person name="Land M."/>
            <person name="Hauser L."/>
            <person name="Kyrpides N."/>
            <person name="Mikhailova N."/>
            <person name="Biddle J.F."/>
            <person name="Zhang Z."/>
            <person name="Fitz-Gibbon S.T."/>
            <person name="Lowe T.M."/>
            <person name="Saltikov C."/>
            <person name="House C.H."/>
            <person name="Richardson P."/>
        </authorList>
    </citation>
    <scope>NUCLEOTIDE SEQUENCE [LARGE SCALE GENOMIC DNA]</scope>
    <source>
        <strain>DSM 2338 / JCM 9278 / NBRC 100436 / V24Sta</strain>
    </source>
</reference>
<name>GSA_PYRNV</name>
<comment type="catalytic activity">
    <reaction evidence="1">
        <text>(S)-4-amino-5-oxopentanoate = 5-aminolevulinate</text>
        <dbReference type="Rhea" id="RHEA:14265"/>
        <dbReference type="ChEBI" id="CHEBI:57501"/>
        <dbReference type="ChEBI" id="CHEBI:356416"/>
        <dbReference type="EC" id="5.4.3.8"/>
    </reaction>
</comment>
<comment type="cofactor">
    <cofactor evidence="1">
        <name>pyridoxal 5'-phosphate</name>
        <dbReference type="ChEBI" id="CHEBI:597326"/>
    </cofactor>
</comment>
<comment type="pathway">
    <text evidence="1">Porphyrin-containing compound metabolism; protoporphyrin-IX biosynthesis; 5-aminolevulinate from L-glutamyl-tRNA(Glu): step 2/2.</text>
</comment>
<comment type="subcellular location">
    <subcellularLocation>
        <location evidence="1">Cytoplasm</location>
    </subcellularLocation>
</comment>
<comment type="similarity">
    <text evidence="1">Belongs to the class-III pyridoxal-phosphate-dependent aminotransferase family. HemL subfamily.</text>
</comment>
<accession>B1YBL3</accession>
<keyword id="KW-0963">Cytoplasm</keyword>
<keyword id="KW-0413">Isomerase</keyword>
<keyword id="KW-0627">Porphyrin biosynthesis</keyword>
<keyword id="KW-0663">Pyridoxal phosphate</keyword>
<protein>
    <recommendedName>
        <fullName evidence="1">Glutamate-1-semialdehyde 2,1-aminomutase</fullName>
        <shortName evidence="1">GSA</shortName>
        <ecNumber evidence="1">5.4.3.8</ecNumber>
    </recommendedName>
    <alternativeName>
        <fullName evidence="1">Glutamate-1-semialdehyde aminotransferase</fullName>
        <shortName evidence="1">GSA-AT</shortName>
    </alternativeName>
</protein>
<sequence>MLFERARGVFPGGVNSPARALKHLAAPLVANGASGPYLYTDRGRLVDYCMAFGAIILGHAHPRVKNAVAKQLERGWIYALLTEEEVAYAERIKAHVPSIEKMRIVNSGTEATMNAVRLARGYTRRDVIIKFDGNFHGSHDYVLVKAGSGAATWGVPTSAGVPQDVIKLTAVVPYNDVDAFVKAVREVGGRLAAVIVEPIAANYGLIIPDREFIKALREETERAGALLIFDEVVTGFRVGLSGAQGHFGVRPDLTTLGKVVGGGFPIGIFGGRADVMDMVAPSGPVYNAGTYNAHPVSVAAGLAVVEELERGEPYKIANEAAERLARGIEDIAGRVGFDVVVKQIASMFQLYFRRGDVKTPQDVRESDERLYLKLHELAIKHGVYLAPSQYETNFTSAAHTRDVVETTLAALEKAFTELKSQVGK</sequence>
<gene>
    <name evidence="1" type="primary">hemL</name>
    <name type="ordered locus">Tneu_1900</name>
</gene>
<proteinExistence type="inferred from homology"/>